<comment type="function">
    <text evidence="1">Catalyzes the NADPH-dependent reduction of L-glutamate 5-phosphate into L-glutamate 5-semialdehyde and phosphate. The product spontaneously undergoes cyclization to form 1-pyrroline-5-carboxylate.</text>
</comment>
<comment type="catalytic activity">
    <reaction evidence="1">
        <text>L-glutamate 5-semialdehyde + phosphate + NADP(+) = L-glutamyl 5-phosphate + NADPH + H(+)</text>
        <dbReference type="Rhea" id="RHEA:19541"/>
        <dbReference type="ChEBI" id="CHEBI:15378"/>
        <dbReference type="ChEBI" id="CHEBI:43474"/>
        <dbReference type="ChEBI" id="CHEBI:57783"/>
        <dbReference type="ChEBI" id="CHEBI:58066"/>
        <dbReference type="ChEBI" id="CHEBI:58274"/>
        <dbReference type="ChEBI" id="CHEBI:58349"/>
        <dbReference type="EC" id="1.2.1.41"/>
    </reaction>
</comment>
<comment type="pathway">
    <text evidence="1">Amino-acid biosynthesis; L-proline biosynthesis; L-glutamate 5-semialdehyde from L-glutamate: step 2/2.</text>
</comment>
<comment type="subcellular location">
    <subcellularLocation>
        <location evidence="1">Cytoplasm</location>
    </subcellularLocation>
</comment>
<comment type="similarity">
    <text evidence="1">Belongs to the gamma-glutamyl phosphate reductase family.</text>
</comment>
<name>PROA_AZOPC</name>
<gene>
    <name evidence="1" type="primary">proA</name>
    <name type="ordered locus">CFPG_719</name>
</gene>
<keyword id="KW-0028">Amino-acid biosynthesis</keyword>
<keyword id="KW-0963">Cytoplasm</keyword>
<keyword id="KW-0521">NADP</keyword>
<keyword id="KW-0560">Oxidoreductase</keyword>
<keyword id="KW-0641">Proline biosynthesis</keyword>
<keyword id="KW-1185">Reference proteome</keyword>
<protein>
    <recommendedName>
        <fullName evidence="1">Gamma-glutamyl phosphate reductase</fullName>
        <shortName evidence="1">GPR</shortName>
        <ecNumber evidence="1">1.2.1.41</ecNumber>
    </recommendedName>
    <alternativeName>
        <fullName evidence="1">Glutamate-5-semialdehyde dehydrogenase</fullName>
    </alternativeName>
    <alternativeName>
        <fullName evidence="1">Glutamyl-gamma-semialdehyde dehydrogenase</fullName>
        <shortName evidence="1">GSA dehydrogenase</shortName>
    </alternativeName>
</protein>
<evidence type="ECO:0000255" key="1">
    <source>
        <dbReference type="HAMAP-Rule" id="MF_00412"/>
    </source>
</evidence>
<feature type="chain" id="PRO_1000123775" description="Gamma-glutamyl phosphate reductase">
    <location>
        <begin position="1"/>
        <end position="419"/>
    </location>
</feature>
<sequence length="419" mass="46619">MFMNDQVYDLLRQAVIASRTLVDMSNKTIKNILRNTADHLLENQNTILEANAEDLSRIDPSDQKYDRLKLTKERLQTMADDMRSVAVLSSPIGKVLHEITRPNGMLIRKVSVPFGVIGIIYEARPNVTFDVFSLCFKSGNACVLKGGSDASLSNHALVNIIHQVLQKYRININTCILLPPNREVTAALLGAVGLVDLIIPRGSSSLINFVRNNTRVPVIETGAGICHTYFDKKGDKDKGRAIINNAKTRRVSVCNALDCLVLHRERLNDLPYICGDLQKNNVIIYADEPSYKVLVTCYPANLIQLAVEESFGTEFLDYKMSIRTVNNIREAIDHITRYSSKHSECIVSESPKTINFFLQKIDAACVYANVSTAFTDGSQFGMGAEIGISTQKLHARGPMALEELTTYKYLIEGSGQIRS</sequence>
<organism>
    <name type="scientific">Azobacteroides pseudotrichonymphae genomovar. CFP2</name>
    <dbReference type="NCBI Taxonomy" id="511995"/>
    <lineage>
        <taxon>Bacteria</taxon>
        <taxon>Pseudomonadati</taxon>
        <taxon>Bacteroidota</taxon>
        <taxon>Bacteroidia</taxon>
        <taxon>Bacteroidales</taxon>
        <taxon>Candidatus Azobacteroides</taxon>
    </lineage>
</organism>
<accession>B6YS10</accession>
<proteinExistence type="inferred from homology"/>
<dbReference type="EC" id="1.2.1.41" evidence="1"/>
<dbReference type="EMBL" id="AP010656">
    <property type="protein sequence ID" value="BAG83982.1"/>
    <property type="molecule type" value="Genomic_DNA"/>
</dbReference>
<dbReference type="RefSeq" id="WP_012573738.1">
    <property type="nucleotide sequence ID" value="NC_011565.1"/>
</dbReference>
<dbReference type="SMR" id="B6YS10"/>
<dbReference type="STRING" id="511995.CFPG_719"/>
<dbReference type="KEGG" id="aps:CFPG_719"/>
<dbReference type="eggNOG" id="COG0014">
    <property type="taxonomic scope" value="Bacteria"/>
</dbReference>
<dbReference type="HOGENOM" id="CLU_030231_0_0_10"/>
<dbReference type="UniPathway" id="UPA00098">
    <property type="reaction ID" value="UER00360"/>
</dbReference>
<dbReference type="Proteomes" id="UP000000723">
    <property type="component" value="Chromosome"/>
</dbReference>
<dbReference type="GO" id="GO:0005737">
    <property type="term" value="C:cytoplasm"/>
    <property type="evidence" value="ECO:0007669"/>
    <property type="project" value="UniProtKB-SubCell"/>
</dbReference>
<dbReference type="GO" id="GO:0004350">
    <property type="term" value="F:glutamate-5-semialdehyde dehydrogenase activity"/>
    <property type="evidence" value="ECO:0007669"/>
    <property type="project" value="UniProtKB-UniRule"/>
</dbReference>
<dbReference type="GO" id="GO:0050661">
    <property type="term" value="F:NADP binding"/>
    <property type="evidence" value="ECO:0007669"/>
    <property type="project" value="InterPro"/>
</dbReference>
<dbReference type="GO" id="GO:0055129">
    <property type="term" value="P:L-proline biosynthetic process"/>
    <property type="evidence" value="ECO:0007669"/>
    <property type="project" value="UniProtKB-UniRule"/>
</dbReference>
<dbReference type="CDD" id="cd07079">
    <property type="entry name" value="ALDH_F18-19_ProA-GPR"/>
    <property type="match status" value="1"/>
</dbReference>
<dbReference type="Gene3D" id="3.40.605.10">
    <property type="entry name" value="Aldehyde Dehydrogenase, Chain A, domain 1"/>
    <property type="match status" value="1"/>
</dbReference>
<dbReference type="Gene3D" id="3.40.309.10">
    <property type="entry name" value="Aldehyde Dehydrogenase, Chain A, domain 2"/>
    <property type="match status" value="1"/>
</dbReference>
<dbReference type="HAMAP" id="MF_00412">
    <property type="entry name" value="ProA"/>
    <property type="match status" value="1"/>
</dbReference>
<dbReference type="InterPro" id="IPR016161">
    <property type="entry name" value="Ald_DH/histidinol_DH"/>
</dbReference>
<dbReference type="InterPro" id="IPR016163">
    <property type="entry name" value="Ald_DH_C"/>
</dbReference>
<dbReference type="InterPro" id="IPR016162">
    <property type="entry name" value="Ald_DH_N"/>
</dbReference>
<dbReference type="InterPro" id="IPR020593">
    <property type="entry name" value="G-glutamylP_reductase_CS"/>
</dbReference>
<dbReference type="InterPro" id="IPR012134">
    <property type="entry name" value="Glu-5-SA_DH"/>
</dbReference>
<dbReference type="InterPro" id="IPR000965">
    <property type="entry name" value="GPR_dom"/>
</dbReference>
<dbReference type="NCBIfam" id="NF001221">
    <property type="entry name" value="PRK00197.1"/>
    <property type="match status" value="1"/>
</dbReference>
<dbReference type="NCBIfam" id="TIGR00407">
    <property type="entry name" value="proA"/>
    <property type="match status" value="1"/>
</dbReference>
<dbReference type="PANTHER" id="PTHR11063:SF8">
    <property type="entry name" value="DELTA-1-PYRROLINE-5-CARBOXYLATE SYNTHASE"/>
    <property type="match status" value="1"/>
</dbReference>
<dbReference type="PANTHER" id="PTHR11063">
    <property type="entry name" value="GLUTAMATE SEMIALDEHYDE DEHYDROGENASE"/>
    <property type="match status" value="1"/>
</dbReference>
<dbReference type="PIRSF" id="PIRSF000151">
    <property type="entry name" value="GPR"/>
    <property type="match status" value="1"/>
</dbReference>
<dbReference type="SUPFAM" id="SSF53720">
    <property type="entry name" value="ALDH-like"/>
    <property type="match status" value="1"/>
</dbReference>
<dbReference type="PROSITE" id="PS01223">
    <property type="entry name" value="PROA"/>
    <property type="match status" value="1"/>
</dbReference>
<reference key="1">
    <citation type="journal article" date="2008" name="Science">
        <title>Genome of an endosymbiont coupling N2 fixation to cellulolysis within RT protist cells in termite gut.</title>
        <authorList>
            <person name="Hongoh Y."/>
            <person name="Sharma V.K."/>
            <person name="Prakash T."/>
            <person name="Noda S."/>
            <person name="Toh H."/>
            <person name="Taylor T.D."/>
            <person name="Kudo T."/>
            <person name="Sakaki Y."/>
            <person name="Toyoda A."/>
            <person name="Hattori M."/>
            <person name="Ohkuma M."/>
        </authorList>
    </citation>
    <scope>NUCLEOTIDE SEQUENCE [LARGE SCALE GENOMIC DNA]</scope>
</reference>